<name>TVAZ1_HUMAN</name>
<sequence length="109" mass="12306">MRLVARVTVFLTFGTIIDAKTTQPTSMDCAEGRAANLPCNHSTISGNEYVYWYRQIHSQGPQYIIHGLKNNETNEMASLIITEDRKSSTLILPHATLRDTAVYYCIVRV</sequence>
<evidence type="ECO:0000255" key="1"/>
<evidence type="ECO:0000255" key="2">
    <source>
        <dbReference type="PROSITE-ProRule" id="PRU00114"/>
    </source>
</evidence>
<evidence type="ECO:0000303" key="3">
    <source>
    </source>
</evidence>
<evidence type="ECO:0000303" key="4">
    <source>
    </source>
</evidence>
<evidence type="ECO:0000303" key="5">
    <source>
    </source>
</evidence>
<evidence type="ECO:0000303" key="6">
    <source>
    </source>
</evidence>
<evidence type="ECO:0000303" key="7">
    <source>
    </source>
</evidence>
<evidence type="ECO:0000303" key="8">
    <source ref="2"/>
</evidence>
<evidence type="ECO:0000305" key="9"/>
<evidence type="ECO:0007829" key="10">
    <source>
        <dbReference type="PDB" id="5WKI"/>
    </source>
</evidence>
<protein>
    <recommendedName>
        <fullName evidence="8">T cell receptor alpha variable 26-1</fullName>
    </recommendedName>
</protein>
<keyword id="KW-0002">3D-structure</keyword>
<keyword id="KW-1064">Adaptive immunity</keyword>
<keyword id="KW-1003">Cell membrane</keyword>
<keyword id="KW-1015">Disulfide bond</keyword>
<keyword id="KW-0325">Glycoprotein</keyword>
<keyword id="KW-0391">Immunity</keyword>
<keyword id="KW-0393">Immunoglobulin domain</keyword>
<keyword id="KW-0472">Membrane</keyword>
<keyword id="KW-1267">Proteomics identification</keyword>
<keyword id="KW-0675">Receptor</keyword>
<keyword id="KW-1185">Reference proteome</keyword>
<keyword id="KW-0732">Signal</keyword>
<keyword id="KW-1279">T cell receptor</keyword>
<proteinExistence type="evidence at protein level"/>
<comment type="function">
    <text evidence="3 5 6 7">V region of the variable domain of T cell receptor (TR) alpha chain that participates in the antigen recognition (PubMed:24600447). Alpha-beta T cell receptors are antigen specific receptors which are essential to the immune response and are present on the cell surface of T lymphocytes. Recognize peptide-major histocompatibility (MH) (pMH) complexes that are displayed by antigen presenting cells (APC), a prerequisite for efficient T cell adaptive immunity against pathogens (PubMed:25493333). Binding of alpha-beta TR to pMH complex initiates TR-CD3 clustering on the cell surface and intracellular activation of LCK that phosphorylates the ITAM motifs of CD3G, CD3D, CD3E and CD247 enabling the recruitment of ZAP70. In turn ZAP70 phosphorylates LAT, which recruits numerous signaling molecules to form the LAT signalosome. The LAT signalosome propagates signal branching to three major signaling pathways, the calcium, the mitogen-activated protein kinase (MAPK) kinase and the nuclear factor NF-kappa-B (NF-kB) pathways, leading to the mobilization of transcription factors that are critical for gene expression and essential for T cell growth and differentiation (PubMed:23524462). The T cell repertoire is generated in the thymus, by V-(D)-J rearrangement. This repertoire is then shaped by intrathymic selection events to generate a peripheral T cell pool of self-MH restricted, non-autoaggressive T cells. Post-thymic interaction of alpha-beta TR with the pMH complexes shapes TR structural and functional avidity (PubMed:15040585).</text>
</comment>
<comment type="subunit">
    <text evidence="4">Alpha-beta TR is a heterodimer composed of an alpha and beta chain; disulfide-linked. The alpha-beta TR is associated with the transmembrane signaling CD3 coreceptor proteins to form the TR-CD3 (TcR or TCR). The assembly of alpha-beta TR heterodimers with CD3 occurs in the endoplasmic reticulum where a single alpha-beta TR heterodimer associates with one CD3D-CD3E heterodimer, one CD3G-CD3E heterodimer and one CD247 homodimer forming a stable octameric structure. CD3D-CD3E and CD3G-CD3E heterodimers preferentially associate with TR alpha and TR beta chains, respectively. The association of the CD247 homodimer is the last step of TcR assembly in the endoplasmic reticulum and is required for transport to the cell surface.</text>
</comment>
<comment type="subcellular location">
    <subcellularLocation>
        <location evidence="4">Cell membrane</location>
    </subcellularLocation>
</comment>
<comment type="polymorphism">
    <text evidence="9">There are several alleles. The sequence shown is that of IMGT allele TRAV26-1*01.</text>
</comment>
<organism>
    <name type="scientific">Homo sapiens</name>
    <name type="common">Human</name>
    <dbReference type="NCBI Taxonomy" id="9606"/>
    <lineage>
        <taxon>Eukaryota</taxon>
        <taxon>Metazoa</taxon>
        <taxon>Chordata</taxon>
        <taxon>Craniata</taxon>
        <taxon>Vertebrata</taxon>
        <taxon>Euteleostomi</taxon>
        <taxon>Mammalia</taxon>
        <taxon>Eutheria</taxon>
        <taxon>Euarchontoglires</taxon>
        <taxon>Primates</taxon>
        <taxon>Haplorrhini</taxon>
        <taxon>Catarrhini</taxon>
        <taxon>Hominidae</taxon>
        <taxon>Homo</taxon>
    </lineage>
</organism>
<dbReference type="EMBL" id="AC245470">
    <property type="status" value="NOT_ANNOTATED_CDS"/>
    <property type="molecule type" value="Genomic_DNA"/>
</dbReference>
<dbReference type="PDB" id="5WKI">
    <property type="method" value="X-ray"/>
    <property type="resolution" value="2.75 A"/>
    <property type="chains" value="D=18-107"/>
</dbReference>
<dbReference type="PDB" id="7NDT">
    <property type="method" value="X-ray"/>
    <property type="resolution" value="3.00 A"/>
    <property type="chains" value="DDD/III=19-107"/>
</dbReference>
<dbReference type="PDBsum" id="5WKI"/>
<dbReference type="PDBsum" id="7NDT"/>
<dbReference type="SMR" id="A0A087WT03"/>
<dbReference type="FunCoup" id="A0A087WT03">
    <property type="interactions" value="327"/>
</dbReference>
<dbReference type="IMGT_GENE-DB" id="TRAV26-1"/>
<dbReference type="GlyCosmos" id="A0A087WT03">
    <property type="glycosylation" value="2 sites, No reported glycans"/>
</dbReference>
<dbReference type="GlyGen" id="A0A087WT03">
    <property type="glycosylation" value="2 sites"/>
</dbReference>
<dbReference type="BioMuta" id="TRAV26-1"/>
<dbReference type="MassIVE" id="A0A087WT03"/>
<dbReference type="Ensembl" id="ENST00000390455.3">
    <property type="protein sequence ID" value="ENSP00000452431.1"/>
    <property type="gene ID" value="ENSG00000211807.3"/>
</dbReference>
<dbReference type="UCSC" id="uc058zeh.1">
    <property type="organism name" value="human"/>
</dbReference>
<dbReference type="AGR" id="HGNC:12123"/>
<dbReference type="GeneCards" id="TRAV26-1"/>
<dbReference type="HGNC" id="HGNC:12123">
    <property type="gene designation" value="TRAV26-1"/>
</dbReference>
<dbReference type="HPA" id="ENSG00000211807">
    <property type="expression patterns" value="Tissue enriched (lymphoid)"/>
</dbReference>
<dbReference type="neXtProt" id="NX_A0A087WT03"/>
<dbReference type="VEuPathDB" id="HostDB:ENSG00000211807"/>
<dbReference type="GeneTree" id="ENSGT00940000162998"/>
<dbReference type="HOGENOM" id="CLU_077975_8_4_1"/>
<dbReference type="InParanoid" id="A0A087WT03"/>
<dbReference type="OMA" id="PNVMEST"/>
<dbReference type="OrthoDB" id="9631130at2759"/>
<dbReference type="PAN-GO" id="A0A087WT03">
    <property type="GO annotations" value="1 GO annotation based on evolutionary models"/>
</dbReference>
<dbReference type="ChiTaRS" id="TRAV26-1">
    <property type="organism name" value="human"/>
</dbReference>
<dbReference type="Pharos" id="A0A087WT03">
    <property type="development level" value="Tdark"/>
</dbReference>
<dbReference type="PRO" id="PR:A0A087WT03"/>
<dbReference type="Proteomes" id="UP000005640">
    <property type="component" value="Chromosome 14"/>
</dbReference>
<dbReference type="RNAct" id="A0A087WT03">
    <property type="molecule type" value="protein"/>
</dbReference>
<dbReference type="Bgee" id="ENSG00000211807">
    <property type="expression patterns" value="Expressed in lymph node and 59 other cell types or tissues"/>
</dbReference>
<dbReference type="GO" id="GO:0042101">
    <property type="term" value="C:T cell receptor complex"/>
    <property type="evidence" value="ECO:0007669"/>
    <property type="project" value="UniProtKB-KW"/>
</dbReference>
<dbReference type="GO" id="GO:0002250">
    <property type="term" value="P:adaptive immune response"/>
    <property type="evidence" value="ECO:0007669"/>
    <property type="project" value="UniProtKB-KW"/>
</dbReference>
<dbReference type="GO" id="GO:0009617">
    <property type="term" value="P:response to bacterium"/>
    <property type="evidence" value="ECO:0000318"/>
    <property type="project" value="GO_Central"/>
</dbReference>
<dbReference type="Gene3D" id="2.60.40.10">
    <property type="entry name" value="Immunoglobulins"/>
    <property type="match status" value="1"/>
</dbReference>
<dbReference type="InterPro" id="IPR007110">
    <property type="entry name" value="Ig-like_dom"/>
</dbReference>
<dbReference type="InterPro" id="IPR036179">
    <property type="entry name" value="Ig-like_dom_sf"/>
</dbReference>
<dbReference type="InterPro" id="IPR013783">
    <property type="entry name" value="Ig-like_fold"/>
</dbReference>
<dbReference type="InterPro" id="IPR013106">
    <property type="entry name" value="Ig_V-set"/>
</dbReference>
<dbReference type="InterPro" id="IPR052051">
    <property type="entry name" value="TCR_complex_component"/>
</dbReference>
<dbReference type="PANTHER" id="PTHR19433:SF132">
    <property type="entry name" value="T CELL RECEPTOR ALPHA VARIABLE 26-1"/>
    <property type="match status" value="1"/>
</dbReference>
<dbReference type="PANTHER" id="PTHR19433">
    <property type="entry name" value="T-CELL RECEPTOR ALPHA CHAIN V REGION-RELATED"/>
    <property type="match status" value="1"/>
</dbReference>
<dbReference type="Pfam" id="PF07686">
    <property type="entry name" value="V-set"/>
    <property type="match status" value="1"/>
</dbReference>
<dbReference type="SUPFAM" id="SSF48726">
    <property type="entry name" value="Immunoglobulin"/>
    <property type="match status" value="1"/>
</dbReference>
<dbReference type="PROSITE" id="PS50835">
    <property type="entry name" value="IG_LIKE"/>
    <property type="match status" value="1"/>
</dbReference>
<gene>
    <name evidence="8" type="primary">TRAV26-1</name>
</gene>
<accession>A0A087WT03</accession>
<reference key="1">
    <citation type="journal article" date="2003" name="Nature">
        <title>The DNA sequence and analysis of human chromosome 14.</title>
        <authorList>
            <person name="Heilig R."/>
            <person name="Eckenberg R."/>
            <person name="Petit J.-L."/>
            <person name="Fonknechten N."/>
            <person name="Da Silva C."/>
            <person name="Cattolico L."/>
            <person name="Levy M."/>
            <person name="Barbe V."/>
            <person name="De Berardinis V."/>
            <person name="Ureta-Vidal A."/>
            <person name="Pelletier E."/>
            <person name="Vico V."/>
            <person name="Anthouard V."/>
            <person name="Rowen L."/>
            <person name="Madan A."/>
            <person name="Qin S."/>
            <person name="Sun H."/>
            <person name="Du H."/>
            <person name="Pepin K."/>
            <person name="Artiguenave F."/>
            <person name="Robert C."/>
            <person name="Cruaud C."/>
            <person name="Bruels T."/>
            <person name="Jaillon O."/>
            <person name="Friedlander L."/>
            <person name="Samson G."/>
            <person name="Brottier P."/>
            <person name="Cure S."/>
            <person name="Segurens B."/>
            <person name="Aniere F."/>
            <person name="Samain S."/>
            <person name="Crespeau H."/>
            <person name="Abbasi N."/>
            <person name="Aiach N."/>
            <person name="Boscus D."/>
            <person name="Dickhoff R."/>
            <person name="Dors M."/>
            <person name="Dubois I."/>
            <person name="Friedman C."/>
            <person name="Gouyvenoux M."/>
            <person name="James R."/>
            <person name="Madan A."/>
            <person name="Mairey-Estrada B."/>
            <person name="Mangenot S."/>
            <person name="Martins N."/>
            <person name="Menard M."/>
            <person name="Oztas S."/>
            <person name="Ratcliffe A."/>
            <person name="Shaffer T."/>
            <person name="Trask B."/>
            <person name="Vacherie B."/>
            <person name="Bellemere C."/>
            <person name="Belser C."/>
            <person name="Besnard-Gonnet M."/>
            <person name="Bartol-Mavel D."/>
            <person name="Boutard M."/>
            <person name="Briez-Silla S."/>
            <person name="Combette S."/>
            <person name="Dufosse-Laurent V."/>
            <person name="Ferron C."/>
            <person name="Lechaplais C."/>
            <person name="Louesse C."/>
            <person name="Muselet D."/>
            <person name="Magdelenat G."/>
            <person name="Pateau E."/>
            <person name="Petit E."/>
            <person name="Sirvain-Trukniewicz P."/>
            <person name="Trybou A."/>
            <person name="Vega-Czarny N."/>
            <person name="Bataille E."/>
            <person name="Bluet E."/>
            <person name="Bordelais I."/>
            <person name="Dubois M."/>
            <person name="Dumont C."/>
            <person name="Guerin T."/>
            <person name="Haffray S."/>
            <person name="Hammadi R."/>
            <person name="Muanga J."/>
            <person name="Pellouin V."/>
            <person name="Robert D."/>
            <person name="Wunderle E."/>
            <person name="Gauguet G."/>
            <person name="Roy A."/>
            <person name="Sainte-Marthe L."/>
            <person name="Verdier J."/>
            <person name="Verdier-Discala C."/>
            <person name="Hillier L.W."/>
            <person name="Fulton L."/>
            <person name="McPherson J."/>
            <person name="Matsuda F."/>
            <person name="Wilson R."/>
            <person name="Scarpelli C."/>
            <person name="Gyapay G."/>
            <person name="Wincker P."/>
            <person name="Saurin W."/>
            <person name="Quetier F."/>
            <person name="Waterston R."/>
            <person name="Hood L."/>
            <person name="Weissenbach J."/>
        </authorList>
    </citation>
    <scope>NUCLEOTIDE SEQUENCE [LARGE SCALE GENOMIC DNA] (IMGT ALLELE TRAV26-1*01)</scope>
</reference>
<reference key="2">
    <citation type="book" date="2001" name="The T Cell Receptor FactsBook.">
        <title>The T Cell Receptor FactsBook.</title>
        <editorList>
            <person name="Lefranc M.P."/>
            <person name="Lefranc G."/>
        </editorList>
        <authorList>
            <person name="Lefranc M.P."/>
            <person name="Lefranc G."/>
        </authorList>
    </citation>
    <scope>NOMENCLATURE</scope>
</reference>
<reference key="3">
    <citation type="journal article" date="2004" name="Nat. Rev. Immunol.">
        <title>The many important facets of T-cell repertoire diversity.</title>
        <authorList>
            <person name="Nikolich-Zugich J."/>
            <person name="Slifka M.K."/>
            <person name="Messaoudi I."/>
        </authorList>
    </citation>
    <scope>REVIEW ON T CELL REPERTOIRE DIVERSITY</scope>
</reference>
<reference key="4">
    <citation type="journal article" date="2010" name="Cold Spring Harb. Perspect. Biol.">
        <title>Structural biology of the T-cell receptor: insights into receptor assembly, ligand recognition, and initiation of signaling.</title>
        <authorList>
            <person name="Wucherpfennig K.W."/>
            <person name="Gagnon E."/>
            <person name="Call M.J."/>
            <person name="Huseby E.S."/>
            <person name="Call M.E."/>
        </authorList>
    </citation>
    <scope>REVIEW ON T CELL RECEPTOR-CD3 COMPLEX ASSEMBLY</scope>
    <scope>SUBCELLULAR LOCATION</scope>
</reference>
<reference key="5">
    <citation type="journal article" date="2013" name="Nat. Rev. Immunol.">
        <title>T cell receptor signalling networks: branched, diversified and bounded.</title>
        <authorList>
            <person name="Brownlie R.J."/>
            <person name="Zamoyska R."/>
        </authorList>
    </citation>
    <scope>REVIEW ON T CELL RECEPTOR SIGNALING</scope>
</reference>
<reference key="6">
    <citation type="journal article" date="2014" name="Front. Immunol.">
        <title>Immunoglobulin and T Cell Receptor Genes: IMGT((R)) and the Birth and Rise of Immunoinformatics.</title>
        <authorList>
            <person name="Lefranc M.P."/>
        </authorList>
    </citation>
    <scope>NOMENCLATURE</scope>
</reference>
<reference key="7">
    <citation type="journal article" date="2015" name="Annu. Rev. Immunol.">
        <title>T cell antigen receptor recognition of antigen-presenting molecules.</title>
        <authorList>
            <person name="Rossjohn J."/>
            <person name="Gras S."/>
            <person name="Miles J.J."/>
            <person name="Turner S.J."/>
            <person name="Godfrey D.I."/>
            <person name="McCluskey J."/>
        </authorList>
    </citation>
    <scope>REVIEW ON FUNCTION</scope>
</reference>
<feature type="signal peptide" evidence="1">
    <location>
        <begin position="1"/>
        <end position="19"/>
    </location>
</feature>
<feature type="chain" id="PRO_5001831875" description="T cell receptor alpha variable 26-1" evidence="1">
    <location>
        <begin position="20"/>
        <end position="109"/>
    </location>
</feature>
<feature type="domain" description="Ig-like" evidence="2">
    <location>
        <begin position="20"/>
        <end position="109" status="greater than"/>
    </location>
</feature>
<feature type="glycosylation site" description="N-linked (GlcNAc...) asparagine" evidence="1">
    <location>
        <position position="40"/>
    </location>
</feature>
<feature type="glycosylation site" description="N-linked (GlcNAc...) asparagine" evidence="1">
    <location>
        <position position="71"/>
    </location>
</feature>
<feature type="disulfide bond" evidence="2">
    <location>
        <begin position="39"/>
        <end position="105"/>
    </location>
</feature>
<feature type="non-terminal residue">
    <location>
        <position position="109"/>
    </location>
</feature>
<feature type="strand" evidence="10">
    <location>
        <begin position="25"/>
        <end position="30"/>
    </location>
</feature>
<feature type="strand" evidence="10">
    <location>
        <begin position="35"/>
        <end position="40"/>
    </location>
</feature>
<feature type="strand" evidence="10">
    <location>
        <begin position="48"/>
        <end position="55"/>
    </location>
</feature>
<feature type="strand" evidence="10">
    <location>
        <begin position="62"/>
        <end position="70"/>
    </location>
</feature>
<feature type="strand" evidence="10">
    <location>
        <begin position="78"/>
        <end position="81"/>
    </location>
</feature>
<feature type="strand" evidence="10">
    <location>
        <begin position="86"/>
        <end position="94"/>
    </location>
</feature>
<feature type="helix" evidence="10">
    <location>
        <begin position="97"/>
        <end position="99"/>
    </location>
</feature>
<feature type="strand" evidence="10">
    <location>
        <begin position="101"/>
        <end position="107"/>
    </location>
</feature>